<organism>
    <name type="scientific">Gallus gallus</name>
    <name type="common">Chicken</name>
    <dbReference type="NCBI Taxonomy" id="9031"/>
    <lineage>
        <taxon>Eukaryota</taxon>
        <taxon>Metazoa</taxon>
        <taxon>Chordata</taxon>
        <taxon>Craniata</taxon>
        <taxon>Vertebrata</taxon>
        <taxon>Euteleostomi</taxon>
        <taxon>Archelosauria</taxon>
        <taxon>Archosauria</taxon>
        <taxon>Dinosauria</taxon>
        <taxon>Saurischia</taxon>
        <taxon>Theropoda</taxon>
        <taxon>Coelurosauria</taxon>
        <taxon>Aves</taxon>
        <taxon>Neognathae</taxon>
        <taxon>Galloanserae</taxon>
        <taxon>Galliformes</taxon>
        <taxon>Phasianidae</taxon>
        <taxon>Phasianinae</taxon>
        <taxon>Gallus</taxon>
    </lineage>
</organism>
<keyword id="KW-0175">Coiled coil</keyword>
<keyword id="KW-0963">Cytoplasm</keyword>
<keyword id="KW-0506">mRNA capping</keyword>
<keyword id="KW-0507">mRNA processing</keyword>
<keyword id="KW-0508">mRNA splicing</keyword>
<keyword id="KW-0509">mRNA transport</keyword>
<keyword id="KW-0866">Nonsense-mediated mRNA decay</keyword>
<keyword id="KW-0539">Nucleus</keyword>
<keyword id="KW-1185">Reference proteome</keyword>
<keyword id="KW-0943">RNA-mediated gene silencing</keyword>
<keyword id="KW-0810">Translation regulation</keyword>
<keyword id="KW-0813">Transport</keyword>
<reference key="1">
    <citation type="journal article" date="2005" name="Genome Biol.">
        <title>Full-length cDNAs from chicken bursal lymphocytes to facilitate gene function analysis.</title>
        <authorList>
            <person name="Caldwell R.B."/>
            <person name="Kierzek A.M."/>
            <person name="Arakawa H."/>
            <person name="Bezzubov Y."/>
            <person name="Zaim J."/>
            <person name="Fiedler P."/>
            <person name="Kutter S."/>
            <person name="Blagodatski A."/>
            <person name="Kostovska D."/>
            <person name="Koter M."/>
            <person name="Plachy J."/>
            <person name="Carninci P."/>
            <person name="Hayashizaki Y."/>
            <person name="Buerstedde J.-M."/>
        </authorList>
    </citation>
    <scope>NUCLEOTIDE SEQUENCE [LARGE SCALE MRNA]</scope>
    <source>
        <strain>CB</strain>
        <tissue>Bursa of Fabricius</tissue>
    </source>
</reference>
<sequence>MSRRRHSDDSDDSDGQPHKRRRTSEPSEIEERLESLICRVGEKSNSSLESNLEGLAGVLEADLPNYKSKILRILCTVARLLPEKLTVYTTLVGLLNARNYNFGGEFVEAMIRQLKECLKVNMYNEAVHLVRFLSDLVNCHVIAAPSMVAMFENFVSVTQEEDVPQVRCDWYIFAFLSSLPWVGKELYEKKDAEMDRLLSQTESYLKRRQKIHVPMLQVWTADKPHPQEEYLDCLWSQIQKLKKDRWQERHILRPYLAFDSILCEALQHNLPPFTPPPHTEDSVYPMPRVIFRMFDYTDDPEGPVMPGSHSVERFVIEENLHCIIKSHWKERKTCAAQLLSYPGNNKIPLNYHIVEVIFAELFQLPSPPHIEVMYTTLLIELCKLQPGSLPQVLAQATEMLYMRLDTMNTTCVDRFINWFSHHLSNFQFRWSWEDWSDCLTQDLEKPKPKFVREVLEKCMRLSYHQRIIDIVPASFSVLSPANPVCIYKYGDESNRSLPGYTVALCLTIAIKNKASNDEIFSILKDVPNPNQDDDDDEGFTFNPLKIEVFVQTLLHLAAKSFSHSFSALAKFHEVFKTLAESDEGKLHVLRVVYEVWKNHPQMIAVLVDKMIRTQIVDCAAVANWIFSSELAHDFTRFYIWEILHSTIRKMNKHVLKIHKELEDTKARLARQHKRRDSDDDDRSSDREDGPLEEQIERLQEKVESAQSEQKNLFLVIFQRFIMLLTEHLVRCETGGIDVFTPWYKSCIERLQQIFLQHHQIIQQYMVTFENLLFTAELDHHILAVFQQFCALQA</sequence>
<dbReference type="EMBL" id="AJ720288">
    <property type="protein sequence ID" value="CAG31947.1"/>
    <property type="molecule type" value="mRNA"/>
</dbReference>
<dbReference type="RefSeq" id="NP_001026611.1">
    <property type="nucleotide sequence ID" value="NM_001031440.2"/>
</dbReference>
<dbReference type="SMR" id="Q5ZJZ6"/>
<dbReference type="FunCoup" id="Q5ZJZ6">
    <property type="interactions" value="3333"/>
</dbReference>
<dbReference type="STRING" id="9031.ENSGALP00000003250"/>
<dbReference type="PaxDb" id="9031-ENSGALP00000003250"/>
<dbReference type="Ensembl" id="ENSGALT00010022864.1">
    <property type="protein sequence ID" value="ENSGALP00010013210.1"/>
    <property type="gene ID" value="ENSGALG00010009593.1"/>
</dbReference>
<dbReference type="GeneID" id="427379"/>
<dbReference type="KEGG" id="gga:427379"/>
<dbReference type="CTD" id="4686"/>
<dbReference type="VEuPathDB" id="HostDB:geneid_427379"/>
<dbReference type="eggNOG" id="KOG1104">
    <property type="taxonomic scope" value="Eukaryota"/>
</dbReference>
<dbReference type="GeneTree" id="ENSGT00390000001733"/>
<dbReference type="HOGENOM" id="CLU_013207_0_0_1"/>
<dbReference type="InParanoid" id="Q5ZJZ6"/>
<dbReference type="OMA" id="CAAEGLM"/>
<dbReference type="OrthoDB" id="10252707at2759"/>
<dbReference type="PhylomeDB" id="Q5ZJZ6"/>
<dbReference type="Reactome" id="R-GGA-111367">
    <property type="pathway name" value="SLBP independent Processing of Histone Pre-mRNAs"/>
</dbReference>
<dbReference type="Reactome" id="R-GGA-112382">
    <property type="pathway name" value="Formation of RNA Pol II elongation complex"/>
</dbReference>
<dbReference type="Reactome" id="R-GGA-113418">
    <property type="pathway name" value="Formation of the Early Elongation Complex"/>
</dbReference>
<dbReference type="Reactome" id="R-GGA-159227">
    <property type="pathway name" value="Transport of the SLBP independent Mature mRNA"/>
</dbReference>
<dbReference type="Reactome" id="R-GGA-159230">
    <property type="pathway name" value="Transport of the SLBP Dependant Mature mRNA"/>
</dbReference>
<dbReference type="Reactome" id="R-GGA-159236">
    <property type="pathway name" value="Transport of Mature mRNA derived from an Intron-Containing Transcript"/>
</dbReference>
<dbReference type="Reactome" id="R-GGA-674695">
    <property type="pathway name" value="RNA Polymerase II Pre-transcription Events"/>
</dbReference>
<dbReference type="Reactome" id="R-GGA-6803529">
    <property type="pathway name" value="FGFR2 alternative splicing"/>
</dbReference>
<dbReference type="Reactome" id="R-GGA-6807505">
    <property type="pathway name" value="RNA polymerase II transcribes snRNA genes"/>
</dbReference>
<dbReference type="Reactome" id="R-GGA-72086">
    <property type="pathway name" value="mRNA Capping"/>
</dbReference>
<dbReference type="Reactome" id="R-GGA-72163">
    <property type="pathway name" value="mRNA Splicing - Major Pathway"/>
</dbReference>
<dbReference type="Reactome" id="R-GGA-72165">
    <property type="pathway name" value="mRNA Splicing - Minor Pathway"/>
</dbReference>
<dbReference type="Reactome" id="R-GGA-72187">
    <property type="pathway name" value="mRNA 3'-end processing"/>
</dbReference>
<dbReference type="Reactome" id="R-GGA-72203">
    <property type="pathway name" value="Processing of Capped Intron-Containing Pre-mRNA"/>
</dbReference>
<dbReference type="Reactome" id="R-GGA-73856">
    <property type="pathway name" value="RNA Polymerase II Transcription Termination"/>
</dbReference>
<dbReference type="Reactome" id="R-GGA-77588">
    <property type="pathway name" value="SLBP Dependent Processing of Replication-Dependent Histone Pre-mRNAs"/>
</dbReference>
<dbReference type="Reactome" id="R-GGA-77595">
    <property type="pathway name" value="Processing of Intronless Pre-mRNAs"/>
</dbReference>
<dbReference type="Reactome" id="R-GGA-975956">
    <property type="pathway name" value="Nonsense Mediated Decay (NMD) independent of the Exon Junction Complex (EJC)"/>
</dbReference>
<dbReference type="Reactome" id="R-GGA-975957">
    <property type="pathway name" value="Nonsense Mediated Decay (NMD) enhanced by the Exon Junction Complex (EJC)"/>
</dbReference>
<dbReference type="PRO" id="PR:Q5ZJZ6"/>
<dbReference type="Proteomes" id="UP000000539">
    <property type="component" value="Chromosome Z"/>
</dbReference>
<dbReference type="Bgee" id="ENSGALG00000002087">
    <property type="expression patterns" value="Expressed in spermatid and 14 other cell types or tissues"/>
</dbReference>
<dbReference type="GO" id="GO:0005737">
    <property type="term" value="C:cytoplasm"/>
    <property type="evidence" value="ECO:0007669"/>
    <property type="project" value="UniProtKB-SubCell"/>
</dbReference>
<dbReference type="GO" id="GO:0005846">
    <property type="term" value="C:nuclear cap binding complex"/>
    <property type="evidence" value="ECO:0000250"/>
    <property type="project" value="UniProtKB"/>
</dbReference>
<dbReference type="GO" id="GO:0005634">
    <property type="term" value="C:nucleus"/>
    <property type="evidence" value="ECO:0000250"/>
    <property type="project" value="UniProtKB"/>
</dbReference>
<dbReference type="GO" id="GO:0003729">
    <property type="term" value="F:mRNA binding"/>
    <property type="evidence" value="ECO:0000318"/>
    <property type="project" value="GO_Central"/>
</dbReference>
<dbReference type="GO" id="GO:0000339">
    <property type="term" value="F:RNA cap binding"/>
    <property type="evidence" value="ECO:0000318"/>
    <property type="project" value="GO_Central"/>
</dbReference>
<dbReference type="GO" id="GO:0006370">
    <property type="term" value="P:7-methylguanosine mRNA capping"/>
    <property type="evidence" value="ECO:0000250"/>
    <property type="project" value="UniProtKB"/>
</dbReference>
<dbReference type="GO" id="GO:0006406">
    <property type="term" value="P:mRNA export from nucleus"/>
    <property type="evidence" value="ECO:0000250"/>
    <property type="project" value="UniProtKB"/>
</dbReference>
<dbReference type="GO" id="GO:0000184">
    <property type="term" value="P:nuclear-transcribed mRNA catabolic process, nonsense-mediated decay"/>
    <property type="evidence" value="ECO:0000250"/>
    <property type="project" value="UniProtKB"/>
</dbReference>
<dbReference type="GO" id="GO:0050684">
    <property type="term" value="P:regulation of mRNA processing"/>
    <property type="evidence" value="ECO:0000318"/>
    <property type="project" value="GO_Central"/>
</dbReference>
<dbReference type="GO" id="GO:0006446">
    <property type="term" value="P:regulation of translational initiation"/>
    <property type="evidence" value="ECO:0000250"/>
    <property type="project" value="UniProtKB"/>
</dbReference>
<dbReference type="GO" id="GO:0031047">
    <property type="term" value="P:regulatory ncRNA-mediated gene silencing"/>
    <property type="evidence" value="ECO:0007669"/>
    <property type="project" value="UniProtKB-KW"/>
</dbReference>
<dbReference type="GO" id="GO:0008380">
    <property type="term" value="P:RNA splicing"/>
    <property type="evidence" value="ECO:0007669"/>
    <property type="project" value="UniProtKB-KW"/>
</dbReference>
<dbReference type="FunFam" id="1.25.40.180:FF:000021">
    <property type="entry name" value="Nuclear cap binding protein subunit 1"/>
    <property type="match status" value="1"/>
</dbReference>
<dbReference type="FunFam" id="1.25.40.180:FF:000010">
    <property type="entry name" value="Nuclear cap-binding protein subunit 1"/>
    <property type="match status" value="1"/>
</dbReference>
<dbReference type="Gene3D" id="1.25.40.180">
    <property type="match status" value="3"/>
</dbReference>
<dbReference type="InterPro" id="IPR016024">
    <property type="entry name" value="ARM-type_fold"/>
</dbReference>
<dbReference type="InterPro" id="IPR027159">
    <property type="entry name" value="CBP80"/>
</dbReference>
<dbReference type="InterPro" id="IPR015172">
    <property type="entry name" value="MIF4G-like_typ-1"/>
</dbReference>
<dbReference type="InterPro" id="IPR015174">
    <property type="entry name" value="MIF4G-like_typ-2"/>
</dbReference>
<dbReference type="InterPro" id="IPR003890">
    <property type="entry name" value="MIF4G-like_typ-3"/>
</dbReference>
<dbReference type="PANTHER" id="PTHR12412">
    <property type="entry name" value="CAP BINDING PROTEIN"/>
    <property type="match status" value="1"/>
</dbReference>
<dbReference type="PANTHER" id="PTHR12412:SF2">
    <property type="entry name" value="NUCLEAR CAP-BINDING PROTEIN SUBUNIT 1"/>
    <property type="match status" value="1"/>
</dbReference>
<dbReference type="Pfam" id="PF02854">
    <property type="entry name" value="MIF4G"/>
    <property type="match status" value="1"/>
</dbReference>
<dbReference type="Pfam" id="PF09088">
    <property type="entry name" value="MIF4G_like"/>
    <property type="match status" value="1"/>
</dbReference>
<dbReference type="Pfam" id="PF09090">
    <property type="entry name" value="MIF4G_like_2"/>
    <property type="match status" value="1"/>
</dbReference>
<dbReference type="SMART" id="SM00543">
    <property type="entry name" value="MIF4G"/>
    <property type="match status" value="1"/>
</dbReference>
<dbReference type="SUPFAM" id="SSF48371">
    <property type="entry name" value="ARM repeat"/>
    <property type="match status" value="3"/>
</dbReference>
<feature type="chain" id="PRO_0000239781" description="Nuclear cap-binding protein subunit 1">
    <location>
        <begin position="1"/>
        <end position="793"/>
    </location>
</feature>
<feature type="domain" description="MIF4G">
    <location>
        <begin position="30"/>
        <end position="242"/>
    </location>
</feature>
<feature type="region of interest" description="Disordered" evidence="3">
    <location>
        <begin position="1"/>
        <end position="30"/>
    </location>
</feature>
<feature type="region of interest" description="Disordered" evidence="3">
    <location>
        <begin position="668"/>
        <end position="692"/>
    </location>
</feature>
<feature type="coiled-coil region" evidence="2">
    <location>
        <begin position="686"/>
        <end position="716"/>
    </location>
</feature>
<feature type="compositionally biased region" description="Basic and acidic residues" evidence="3">
    <location>
        <begin position="683"/>
        <end position="692"/>
    </location>
</feature>
<protein>
    <recommendedName>
        <fullName>Nuclear cap-binding protein subunit 1</fullName>
    </recommendedName>
    <alternativeName>
        <fullName>80 kDa nuclear cap-binding protein</fullName>
        <shortName>CBP80</shortName>
        <shortName>NCBP 80 kDa subunit</shortName>
    </alternativeName>
</protein>
<name>NCBP1_CHICK</name>
<proteinExistence type="evidence at transcript level"/>
<evidence type="ECO:0000250" key="1">
    <source>
        <dbReference type="UniProtKB" id="Q09161"/>
    </source>
</evidence>
<evidence type="ECO:0000255" key="2"/>
<evidence type="ECO:0000256" key="3">
    <source>
        <dbReference type="SAM" id="MobiDB-lite"/>
    </source>
</evidence>
<evidence type="ECO:0000305" key="4"/>
<comment type="function">
    <text evidence="1">Component of the cap-binding complex (CBC), which binds cotranscriptionally to the 5'-cap of pre-mRNAs and is involved in various processes such as pre-mRNA splicing, translation regulation, nonsense-mediated mRNA decay, RNA-mediated gene silencing (RNAi) by microRNAs (miRNAs) and mRNA export. The CBC complex is involved in mRNA export from the nucleus, leading to the recruitment of the mRNA export machinery to the 5'-end of mRNA and to mRNA export in a 5' to 3' direction through the nuclear pore. The CBC complex is also involved in mediating U snRNA and intronless mRNAs export from the nucleus. The CBC complex is essential for a pioneer round of mRNA translation, before steady state translation when the CBC complex is replaced by cytoplasmic cap-binding protein eIF4E. The pioneer round of mRNA translation mediated by the CBC complex plays a central role in nonsense-mediated mRNA decay (NMD), NMD only taking place in mRNAs bound to the CBC complex, but not on eIF4E-bound mRNAs. The CBC complex enhances NMD in mRNAs containing at least one exon-junction complex (EJC), promoting the interaction between UPF1 and UPF2. The CBC complex is also involved in 'failsafe' NMD, which is independent of the EJC complex, while it does not participate in Staufen-mediated mRNA decay (SMD). During cell proliferation, the CBC complex is also involved in microRNAs (miRNAs) biogenesis via its interaction with SRRT/ARS2 and is required for miRNA-mediated RNA interference. The CBC complex also acts as a negative regulator of PARN, thereby acting as an inhibitor of mRNA deadenylation. In the CBC complex, NCBP1/CBP80 does not bind directly capped RNAs (m7GpppG-capped RNA) but is required to stabilize the movement of the N-terminal loop of NCBP2/CBP20 and lock the CBC into a high affinity cap-binding state with the cap structure. Associates with NCBP3 to form an alternative cap-binding complex (CBC) which plays a key role in mRNA export. The conventional CBC with NCBP2 binds both small nuclear RNA (snRNA) and messenger (mRNA) and is involved in their export from the nucleus whereas the alternative CBC with NCBP3 does not bind snRNA and associates only with mRNA thereby playing a role only in mRNA export (By similarity).</text>
</comment>
<comment type="subunit">
    <text evidence="1">Component of the nuclear cap-binding complex (CBC), a heterodimer composed of NCBP1/CBP80 and NCBP2/CBP20 that interacts with m7GpppG-capped RNA. Component of an alternative nuclear cap-binding complex (CBC) composed of NCBP1/CBP80 and NCBP3 (By similarity).</text>
</comment>
<comment type="subcellular location">
    <subcellularLocation>
        <location evidence="1">Nucleus</location>
    </subcellularLocation>
    <subcellularLocation>
        <location evidence="1">Cytoplasm</location>
    </subcellularLocation>
</comment>
<comment type="similarity">
    <text evidence="4">Belongs to the NCBP1 family.</text>
</comment>
<gene>
    <name type="primary">NCBP1</name>
    <name type="synonym">CBP80</name>
    <name type="ORF">RCJMB04_14d7</name>
</gene>
<accession>Q5ZJZ6</accession>